<dbReference type="EMBL" id="AE004092">
    <property type="protein sequence ID" value="AAK34496.1"/>
    <property type="molecule type" value="Genomic_DNA"/>
</dbReference>
<dbReference type="EMBL" id="CP000017">
    <property type="protein sequence ID" value="AAZ52111.1"/>
    <property type="molecule type" value="Genomic_DNA"/>
</dbReference>
<dbReference type="RefSeq" id="NP_269775.1">
    <property type="nucleotide sequence ID" value="NC_002737.2"/>
</dbReference>
<dbReference type="SMR" id="P63443"/>
<dbReference type="PaxDb" id="1314-HKU360_01548"/>
<dbReference type="KEGG" id="spy:SPy_1753"/>
<dbReference type="KEGG" id="spz:M5005_Spy1493"/>
<dbReference type="PATRIC" id="fig|160490.10.peg.1526"/>
<dbReference type="HOGENOM" id="CLU_108696_5_0_9"/>
<dbReference type="OMA" id="NENANIM"/>
<dbReference type="UniPathway" id="UPA00094"/>
<dbReference type="Proteomes" id="UP000000750">
    <property type="component" value="Chromosome"/>
</dbReference>
<dbReference type="GO" id="GO:0005829">
    <property type="term" value="C:cytosol"/>
    <property type="evidence" value="ECO:0007669"/>
    <property type="project" value="TreeGrafter"/>
</dbReference>
<dbReference type="GO" id="GO:0016020">
    <property type="term" value="C:membrane"/>
    <property type="evidence" value="ECO:0007669"/>
    <property type="project" value="GOC"/>
</dbReference>
<dbReference type="GO" id="GO:0000035">
    <property type="term" value="F:acyl binding"/>
    <property type="evidence" value="ECO:0007669"/>
    <property type="project" value="TreeGrafter"/>
</dbReference>
<dbReference type="GO" id="GO:0000036">
    <property type="term" value="F:acyl carrier activity"/>
    <property type="evidence" value="ECO:0007669"/>
    <property type="project" value="UniProtKB-UniRule"/>
</dbReference>
<dbReference type="GO" id="GO:0009245">
    <property type="term" value="P:lipid A biosynthetic process"/>
    <property type="evidence" value="ECO:0007669"/>
    <property type="project" value="TreeGrafter"/>
</dbReference>
<dbReference type="Gene3D" id="1.10.1200.10">
    <property type="entry name" value="ACP-like"/>
    <property type="match status" value="1"/>
</dbReference>
<dbReference type="HAMAP" id="MF_01217">
    <property type="entry name" value="Acyl_carrier"/>
    <property type="match status" value="1"/>
</dbReference>
<dbReference type="InterPro" id="IPR003231">
    <property type="entry name" value="ACP"/>
</dbReference>
<dbReference type="InterPro" id="IPR036736">
    <property type="entry name" value="ACP-like_sf"/>
</dbReference>
<dbReference type="InterPro" id="IPR009081">
    <property type="entry name" value="PP-bd_ACP"/>
</dbReference>
<dbReference type="NCBIfam" id="NF002148">
    <property type="entry name" value="PRK00982.1-2"/>
    <property type="match status" value="1"/>
</dbReference>
<dbReference type="NCBIfam" id="NF002150">
    <property type="entry name" value="PRK00982.1-4"/>
    <property type="match status" value="1"/>
</dbReference>
<dbReference type="PANTHER" id="PTHR20863">
    <property type="entry name" value="ACYL CARRIER PROTEIN"/>
    <property type="match status" value="1"/>
</dbReference>
<dbReference type="PANTHER" id="PTHR20863:SF62">
    <property type="entry name" value="ACYL CARRIER PROTEIN"/>
    <property type="match status" value="1"/>
</dbReference>
<dbReference type="Pfam" id="PF00550">
    <property type="entry name" value="PP-binding"/>
    <property type="match status" value="1"/>
</dbReference>
<dbReference type="SUPFAM" id="SSF47336">
    <property type="entry name" value="ACP-like"/>
    <property type="match status" value="1"/>
</dbReference>
<dbReference type="PROSITE" id="PS50075">
    <property type="entry name" value="CARRIER"/>
    <property type="match status" value="1"/>
</dbReference>
<comment type="function">
    <text evidence="1">Carrier of the growing fatty acid chain in fatty acid biosynthesis.</text>
</comment>
<comment type="pathway">
    <text evidence="1">Lipid metabolism; fatty acid biosynthesis.</text>
</comment>
<comment type="subcellular location">
    <subcellularLocation>
        <location evidence="1">Cytoplasm</location>
    </subcellularLocation>
</comment>
<comment type="PTM">
    <text evidence="1">4'-phosphopantetheine is transferred from CoA to a specific serine of apo-ACP by AcpS. This modification is essential for activity because fatty acids are bound in thioester linkage to the sulfhydryl of the prosthetic group.</text>
</comment>
<comment type="similarity">
    <text evidence="1">Belongs to the acyl carrier protein (ACP) family.</text>
</comment>
<name>ACP_STRP1</name>
<reference key="1">
    <citation type="journal article" date="2001" name="Proc. Natl. Acad. Sci. U.S.A.">
        <title>Complete genome sequence of an M1 strain of Streptococcus pyogenes.</title>
        <authorList>
            <person name="Ferretti J.J."/>
            <person name="McShan W.M."/>
            <person name="Ajdic D.J."/>
            <person name="Savic D.J."/>
            <person name="Savic G."/>
            <person name="Lyon K."/>
            <person name="Primeaux C."/>
            <person name="Sezate S."/>
            <person name="Suvorov A.N."/>
            <person name="Kenton S."/>
            <person name="Lai H.S."/>
            <person name="Lin S.P."/>
            <person name="Qian Y."/>
            <person name="Jia H.G."/>
            <person name="Najar F.Z."/>
            <person name="Ren Q."/>
            <person name="Zhu H."/>
            <person name="Song L."/>
            <person name="White J."/>
            <person name="Yuan X."/>
            <person name="Clifton S.W."/>
            <person name="Roe B.A."/>
            <person name="McLaughlin R.E."/>
        </authorList>
    </citation>
    <scope>NUCLEOTIDE SEQUENCE [LARGE SCALE GENOMIC DNA]</scope>
    <source>
        <strain>ATCC 700294 / SF370 / Serotype M1</strain>
    </source>
</reference>
<reference key="2">
    <citation type="journal article" date="2005" name="J. Infect. Dis.">
        <title>Evolutionary origin and emergence of a highly successful clone of serotype M1 group A Streptococcus involved multiple horizontal gene transfer events.</title>
        <authorList>
            <person name="Sumby P."/>
            <person name="Porcella S.F."/>
            <person name="Madrigal A.G."/>
            <person name="Barbian K.D."/>
            <person name="Virtaneva K."/>
            <person name="Ricklefs S.M."/>
            <person name="Sturdevant D.E."/>
            <person name="Graham M.R."/>
            <person name="Vuopio-Varkila J."/>
            <person name="Hoe N.P."/>
            <person name="Musser J.M."/>
        </authorList>
    </citation>
    <scope>NUCLEOTIDE SEQUENCE [LARGE SCALE GENOMIC DNA]</scope>
    <source>
        <strain>ATCC BAA-947 / MGAS5005 / Serotype M1</strain>
    </source>
</reference>
<sequence length="74" mass="8343">MAVFEKVQEIIVEELGKETEEVTLETTFDDLDADSLDVFQVISEIEDAFDIQIETEEGLNTVGDLVAYVEEKSK</sequence>
<keyword id="KW-0963">Cytoplasm</keyword>
<keyword id="KW-0275">Fatty acid biosynthesis</keyword>
<keyword id="KW-0276">Fatty acid metabolism</keyword>
<keyword id="KW-0444">Lipid biosynthesis</keyword>
<keyword id="KW-0443">Lipid metabolism</keyword>
<keyword id="KW-0596">Phosphopantetheine</keyword>
<keyword id="KW-0597">Phosphoprotein</keyword>
<keyword id="KW-1185">Reference proteome</keyword>
<protein>
    <recommendedName>
        <fullName evidence="1">Acyl carrier protein</fullName>
        <shortName evidence="1">ACP</shortName>
    </recommendedName>
</protein>
<evidence type="ECO:0000255" key="1">
    <source>
        <dbReference type="HAMAP-Rule" id="MF_01217"/>
    </source>
</evidence>
<evidence type="ECO:0000255" key="2">
    <source>
        <dbReference type="PROSITE-ProRule" id="PRU00258"/>
    </source>
</evidence>
<proteinExistence type="inferred from homology"/>
<feature type="chain" id="PRO_0000180201" description="Acyl carrier protein">
    <location>
        <begin position="1"/>
        <end position="74"/>
    </location>
</feature>
<feature type="domain" description="Carrier" evidence="2">
    <location>
        <begin position="1"/>
        <end position="73"/>
    </location>
</feature>
<feature type="modified residue" description="O-(pantetheine 4'-phosphoryl)serine" evidence="2">
    <location>
        <position position="35"/>
    </location>
</feature>
<gene>
    <name evidence="1" type="primary">acpP</name>
    <name type="synonym">acpP.2</name>
    <name type="ordered locus">SPy_1753</name>
    <name type="ordered locus">M5005_Spy1493</name>
</gene>
<organism>
    <name type="scientific">Streptococcus pyogenes serotype M1</name>
    <dbReference type="NCBI Taxonomy" id="301447"/>
    <lineage>
        <taxon>Bacteria</taxon>
        <taxon>Bacillati</taxon>
        <taxon>Bacillota</taxon>
        <taxon>Bacilli</taxon>
        <taxon>Lactobacillales</taxon>
        <taxon>Streptococcaceae</taxon>
        <taxon>Streptococcus</taxon>
    </lineage>
</organism>
<accession>P63443</accession>
<accession>Q48X14</accession>
<accession>Q99YD3</accession>